<accession>D0NYM3</accession>
<keyword id="KW-1032">Host cell membrane</keyword>
<keyword id="KW-1043">Host membrane</keyword>
<keyword id="KW-0472">Membrane</keyword>
<keyword id="KW-1185">Reference proteome</keyword>
<keyword id="KW-0964">Secreted</keyword>
<keyword id="KW-0732">Signal</keyword>
<keyword id="KW-0843">Virulence</keyword>
<sequence length="159" mass="17973">MRFLVWVFFVGLVTFVSGTHAISKLANSNEPQSTQLTMKDIDTLTRLLFVEDGDAAKRFLRSNANQDLTTANDDSDVKEEERGLLPSKVTNLISKAKNGWAKWKANALEKAFQHMMKQGETPTSLAKRLEIGGAAELRYEKVYEKYTAWWINYHTVAGT</sequence>
<feature type="signal peptide" evidence="2">
    <location>
        <begin position="1"/>
        <end position="18"/>
    </location>
</feature>
<feature type="chain" id="PRO_5003012498" description="RxLR effector protein 24" evidence="2">
    <location>
        <begin position="19"/>
        <end position="159"/>
    </location>
</feature>
<feature type="region of interest" description="RABA-binding domain" evidence="1">
    <location>
        <begin position="109"/>
        <end position="159"/>
    </location>
</feature>
<feature type="short sequence motif" description="RxLR-dEER" evidence="6">
    <location>
        <begin position="58"/>
        <end position="82"/>
    </location>
</feature>
<evidence type="ECO:0000250" key="1">
    <source>
        <dbReference type="UniProtKB" id="A0A2L0WUE7"/>
    </source>
</evidence>
<evidence type="ECO:0000255" key="2"/>
<evidence type="ECO:0000269" key="3">
    <source>
    </source>
</evidence>
<evidence type="ECO:0000303" key="4">
    <source>
    </source>
</evidence>
<evidence type="ECO:0000305" key="5"/>
<evidence type="ECO:0000305" key="6">
    <source>
    </source>
</evidence>
<reference key="1">
    <citation type="journal article" date="2009" name="Nature">
        <title>Genome sequence and analysis of the Irish potato famine pathogen Phytophthora infestans.</title>
        <authorList>
            <consortium name="The Broad Institute Genome Sequencing Platform"/>
            <person name="Haas B.J."/>
            <person name="Kamoun S."/>
            <person name="Zody M.C."/>
            <person name="Jiang R.H."/>
            <person name="Handsaker R.E."/>
            <person name="Cano L.M."/>
            <person name="Grabherr M."/>
            <person name="Kodira C.D."/>
            <person name="Raffaele S."/>
            <person name="Torto-Alalibo T."/>
            <person name="Bozkurt T.O."/>
            <person name="Ah-Fong A.M."/>
            <person name="Alvarado L."/>
            <person name="Anderson V.L."/>
            <person name="Armstrong M.R."/>
            <person name="Avrova A."/>
            <person name="Baxter L."/>
            <person name="Beynon J."/>
            <person name="Boevink P.C."/>
            <person name="Bollmann S.R."/>
            <person name="Bos J.I."/>
            <person name="Bulone V."/>
            <person name="Cai G."/>
            <person name="Cakir C."/>
            <person name="Carrington J.C."/>
            <person name="Chawner M."/>
            <person name="Conti L."/>
            <person name="Costanzo S."/>
            <person name="Ewan R."/>
            <person name="Fahlgren N."/>
            <person name="Fischbach M.A."/>
            <person name="Fugelstad J."/>
            <person name="Gilroy E.M."/>
            <person name="Gnerre S."/>
            <person name="Green P.J."/>
            <person name="Grenville-Briggs L.J."/>
            <person name="Griffith J."/>
            <person name="Grunwald N.J."/>
            <person name="Horn K."/>
            <person name="Horner N.R."/>
            <person name="Hu C.H."/>
            <person name="Huitema E."/>
            <person name="Jeong D.H."/>
            <person name="Jones A.M."/>
            <person name="Jones J.D."/>
            <person name="Jones R.W."/>
            <person name="Karlsson E.K."/>
            <person name="Kunjeti S.G."/>
            <person name="Lamour K."/>
            <person name="Liu Z."/>
            <person name="Ma L."/>
            <person name="Maclean D."/>
            <person name="Chibucos M.C."/>
            <person name="McDonald H."/>
            <person name="McWalters J."/>
            <person name="Meijer H.J."/>
            <person name="Morgan W."/>
            <person name="Morris P.F."/>
            <person name="Munro C.A."/>
            <person name="O'Neill K."/>
            <person name="Ospina-Giraldo M."/>
            <person name="Pinzon A."/>
            <person name="Pritchard L."/>
            <person name="Ramsahoye B."/>
            <person name="Ren Q."/>
            <person name="Restrepo S."/>
            <person name="Roy S."/>
            <person name="Sadanandom A."/>
            <person name="Savidor A."/>
            <person name="Schornack S."/>
            <person name="Schwartz D.C."/>
            <person name="Schumann U.D."/>
            <person name="Schwessinger B."/>
            <person name="Seyer L."/>
            <person name="Sharpe T."/>
            <person name="Silvar C."/>
            <person name="Song J."/>
            <person name="Studholme D.J."/>
            <person name="Sykes S."/>
            <person name="Thines M."/>
            <person name="van de Vondervoort P.J."/>
            <person name="Phuntumart V."/>
            <person name="Wawra S."/>
            <person name="Weide R."/>
            <person name="Win J."/>
            <person name="Young C."/>
            <person name="Zhou S."/>
            <person name="Fry W."/>
            <person name="Meyers B.C."/>
            <person name="van West P."/>
            <person name="Ristaino J."/>
            <person name="Govers F."/>
            <person name="Birch P.R."/>
            <person name="Whisson S.C."/>
            <person name="Judelson H.S."/>
            <person name="Nusbaum C."/>
        </authorList>
    </citation>
    <scope>NUCLEOTIDE SEQUENCE [LARGE SCALE GENOMIC DNA]</scope>
    <source>
        <strain>T30-4</strain>
    </source>
</reference>
<reference key="2">
    <citation type="journal article" date="2018" name="Plant J.">
        <title>A conserved RxLR effector interacts with host RABA-type GTPases to inhibit vesicle-mediated secretion of antimicrobial proteins.</title>
        <authorList>
            <person name="Tomczynska I."/>
            <person name="Stumpe M."/>
            <person name="Mauch F."/>
        </authorList>
    </citation>
    <scope>FUNCTION</scope>
    <scope>INTERACTION WITH HOST RABA1A; RABA2A AND RABA4A</scope>
</reference>
<organism>
    <name type="scientific">Phytophthora infestans (strain T30-4)</name>
    <name type="common">Potato late blight agent</name>
    <dbReference type="NCBI Taxonomy" id="403677"/>
    <lineage>
        <taxon>Eukaryota</taxon>
        <taxon>Sar</taxon>
        <taxon>Stramenopiles</taxon>
        <taxon>Oomycota</taxon>
        <taxon>Peronosporales</taxon>
        <taxon>Peronosporaceae</taxon>
        <taxon>Phytophthora</taxon>
    </lineage>
</organism>
<dbReference type="EMBL" id="DS028189">
    <property type="protein sequence ID" value="EEY68645.1"/>
    <property type="molecule type" value="Genomic_DNA"/>
</dbReference>
<dbReference type="RefSeq" id="XP_002997548.1">
    <property type="nucleotide sequence ID" value="XM_002997502.1"/>
</dbReference>
<dbReference type="STRING" id="403677.D0NYM3"/>
<dbReference type="EnsemblProtists" id="PITG_18405T0">
    <property type="protein sequence ID" value="PITG_18405T0"/>
    <property type="gene ID" value="PITG_18405"/>
</dbReference>
<dbReference type="GeneID" id="9466355"/>
<dbReference type="KEGG" id="pif:PITG_18405"/>
<dbReference type="VEuPathDB" id="FungiDB:PITG_18405"/>
<dbReference type="eggNOG" id="ENOG502RF03">
    <property type="taxonomic scope" value="Eukaryota"/>
</dbReference>
<dbReference type="HOGENOM" id="CLU_1638744_0_0_1"/>
<dbReference type="InParanoid" id="D0NYM3"/>
<dbReference type="OMA" id="ATEPRYE"/>
<dbReference type="OrthoDB" id="126652at2759"/>
<dbReference type="Proteomes" id="UP000006643">
    <property type="component" value="Partially assembled WGS sequence"/>
</dbReference>
<dbReference type="GO" id="GO:0005576">
    <property type="term" value="C:extracellular region"/>
    <property type="evidence" value="ECO:0007669"/>
    <property type="project" value="UniProtKB-SubCell"/>
</dbReference>
<dbReference type="GO" id="GO:0033645">
    <property type="term" value="C:host cell endomembrane system"/>
    <property type="evidence" value="ECO:0007669"/>
    <property type="project" value="UniProtKB-SubCell"/>
</dbReference>
<dbReference type="GO" id="GO:0020002">
    <property type="term" value="C:host cell plasma membrane"/>
    <property type="evidence" value="ECO:0007669"/>
    <property type="project" value="UniProtKB-SubCell"/>
</dbReference>
<dbReference type="GO" id="GO:0016020">
    <property type="term" value="C:membrane"/>
    <property type="evidence" value="ECO:0007669"/>
    <property type="project" value="UniProtKB-KW"/>
</dbReference>
<comment type="function">
    <text evidence="3">Effector protein that contributes to pathogen virulence (PubMed:29671919). Targets members of the RABA GTPases subfamily to inhibit vesicular secretion, leading to an accumulation of secretory proteins in the endoplasmic reticulum (PubMed:29671919).</text>
</comment>
<comment type="subunit">
    <text evidence="3">Interacts with potato RABA GTPases including RABA1a, RABA2a and RABA4a.</text>
</comment>
<comment type="subcellular location">
    <subcellularLocation>
        <location evidence="1">Secreted</location>
    </subcellularLocation>
    <subcellularLocation>
        <location evidence="1">Host cell membrane</location>
    </subcellularLocation>
    <subcellularLocation>
        <location evidence="1">Host endomembrane system</location>
    </subcellularLocation>
    <text evidence="1">The subcellular localization to plasma and vesicular membranes is most likely the result of binding of RxLR24 to membrane-localized RABA proteins.</text>
</comment>
<comment type="domain">
    <text evidence="6">The RxLR-dEER motif acts to carry the protein into the host cell cytoplasm through binding to cell surface phosphatidylinositol-3-phosphate.</text>
</comment>
<comment type="domain">
    <text evidence="1">The C-terminal part (residues 105 to 155) is required for the binding to RABA GTPasesproteins, causes redirection of the truncated effector to the cytoplasm, and leads tio the loss of the ability to inhibit the host secretory pathway.</text>
</comment>
<comment type="similarity">
    <text evidence="5">Belongs to the RxLR effector family.</text>
</comment>
<proteinExistence type="evidence at protein level"/>
<gene>
    <name evidence="4" type="primary">RxLR24</name>
    <name type="ORF">PITG_18405</name>
</gene>
<name>RLR24_PHYIT</name>
<protein>
    <recommendedName>
        <fullName evidence="4">RxLR effector protein 24</fullName>
    </recommendedName>
</protein>